<evidence type="ECO:0000255" key="1">
    <source>
        <dbReference type="HAMAP-Rule" id="MF_00072"/>
    </source>
</evidence>
<keyword id="KW-0963">Cytoplasm</keyword>
<keyword id="KW-0342">GTP-binding</keyword>
<keyword id="KW-0547">Nucleotide-binding</keyword>
<keyword id="KW-0648">Protein biosynthesis</keyword>
<proteinExistence type="inferred from homology"/>
<sequence length="534" mass="58976">MSDVSNEAARRRTFAIISHPDAGKTTLTEKLLLFGGAIQMAGSVKGRKAARHATSDWMALEKERGISVTSSVMQFPYEGKIVNLLDTPGHADFGEDTYRVLTAVDSALMVIDVAKGVEERTIKLMEVCRLRDTPIMTFINKLDREGKNPIDLLDEVETVLGIQCAPVTWPIGMGQRLKGVVHLISGEVHLYEQGRNFTRQDSTIFPSLDAPGLAEKIGEQMLTELRDELELVQGASNPFDLDAYRAGQQTPVFFGSGVNNFGVQPLLDFFIEHAPPPQTRETTGRRVAPSETKLSGFVFKIQANMDPQHRDRVAFMRVCSGKFTAGMKTLHVRSGKDVKLANALTFMASDREIAAEAWPGDVIGIHNHGTISIGDTFTEGESLSFTGIPNFAPELFRRARLRDPLKLKQLQKGLAQLSEEGATQFFRPLMSNDLILGAVGVLQFDVVAYRLKDEYGVDAIFEPVSVTTARWVHCDNVKKLDEFREKNAGNLGIDAAGQLVYLAPTRVNLQLAQERAPDVRFSATREHVHAKAID</sequence>
<feature type="chain" id="PRO_1000092511" description="Peptide chain release factor 3">
    <location>
        <begin position="1"/>
        <end position="534"/>
    </location>
</feature>
<feature type="domain" description="tr-type G">
    <location>
        <begin position="9"/>
        <end position="278"/>
    </location>
</feature>
<feature type="binding site" evidence="1">
    <location>
        <begin position="18"/>
        <end position="25"/>
    </location>
    <ligand>
        <name>GTP</name>
        <dbReference type="ChEBI" id="CHEBI:37565"/>
    </ligand>
</feature>
<feature type="binding site" evidence="1">
    <location>
        <begin position="86"/>
        <end position="90"/>
    </location>
    <ligand>
        <name>GTP</name>
        <dbReference type="ChEBI" id="CHEBI:37565"/>
    </ligand>
</feature>
<feature type="binding site" evidence="1">
    <location>
        <begin position="140"/>
        <end position="143"/>
    </location>
    <ligand>
        <name>GTP</name>
        <dbReference type="ChEBI" id="CHEBI:37565"/>
    </ligand>
</feature>
<gene>
    <name evidence="1" type="primary">prfC</name>
    <name type="ordered locus">PXO_01678</name>
</gene>
<name>RF3_XANOP</name>
<comment type="function">
    <text evidence="1">Increases the formation of ribosomal termination complexes and stimulates activities of RF-1 and RF-2. It binds guanine nucleotides and has strong preference for UGA stop codons. It may interact directly with the ribosome. The stimulation of RF-1 and RF-2 is significantly reduced by GTP and GDP, but not by GMP.</text>
</comment>
<comment type="subcellular location">
    <subcellularLocation>
        <location evidence="1">Cytoplasm</location>
    </subcellularLocation>
</comment>
<comment type="similarity">
    <text evidence="1">Belongs to the TRAFAC class translation factor GTPase superfamily. Classic translation factor GTPase family. PrfC subfamily.</text>
</comment>
<organism>
    <name type="scientific">Xanthomonas oryzae pv. oryzae (strain PXO99A)</name>
    <dbReference type="NCBI Taxonomy" id="360094"/>
    <lineage>
        <taxon>Bacteria</taxon>
        <taxon>Pseudomonadati</taxon>
        <taxon>Pseudomonadota</taxon>
        <taxon>Gammaproteobacteria</taxon>
        <taxon>Lysobacterales</taxon>
        <taxon>Lysobacteraceae</taxon>
        <taxon>Xanthomonas</taxon>
    </lineage>
</organism>
<accession>B2SSM9</accession>
<dbReference type="EMBL" id="CP000967">
    <property type="protein sequence ID" value="ACD59718.1"/>
    <property type="molecule type" value="Genomic_DNA"/>
</dbReference>
<dbReference type="RefSeq" id="WP_011258565.1">
    <property type="nucleotide sequence ID" value="NC_010717.2"/>
</dbReference>
<dbReference type="SMR" id="B2SSM9"/>
<dbReference type="KEGG" id="xop:PXO_01678"/>
<dbReference type="eggNOG" id="COG4108">
    <property type="taxonomic scope" value="Bacteria"/>
</dbReference>
<dbReference type="HOGENOM" id="CLU_002794_2_1_6"/>
<dbReference type="Proteomes" id="UP000001740">
    <property type="component" value="Chromosome"/>
</dbReference>
<dbReference type="GO" id="GO:0005829">
    <property type="term" value="C:cytosol"/>
    <property type="evidence" value="ECO:0007669"/>
    <property type="project" value="TreeGrafter"/>
</dbReference>
<dbReference type="GO" id="GO:0005525">
    <property type="term" value="F:GTP binding"/>
    <property type="evidence" value="ECO:0007669"/>
    <property type="project" value="UniProtKB-UniRule"/>
</dbReference>
<dbReference type="GO" id="GO:0003924">
    <property type="term" value="F:GTPase activity"/>
    <property type="evidence" value="ECO:0007669"/>
    <property type="project" value="InterPro"/>
</dbReference>
<dbReference type="GO" id="GO:0097216">
    <property type="term" value="F:guanosine tetraphosphate binding"/>
    <property type="evidence" value="ECO:0007669"/>
    <property type="project" value="UniProtKB-ARBA"/>
</dbReference>
<dbReference type="GO" id="GO:0016150">
    <property type="term" value="F:translation release factor activity, codon nonspecific"/>
    <property type="evidence" value="ECO:0007669"/>
    <property type="project" value="TreeGrafter"/>
</dbReference>
<dbReference type="GO" id="GO:0016149">
    <property type="term" value="F:translation release factor activity, codon specific"/>
    <property type="evidence" value="ECO:0007669"/>
    <property type="project" value="UniProtKB-UniRule"/>
</dbReference>
<dbReference type="GO" id="GO:0006449">
    <property type="term" value="P:regulation of translational termination"/>
    <property type="evidence" value="ECO:0007669"/>
    <property type="project" value="UniProtKB-UniRule"/>
</dbReference>
<dbReference type="CDD" id="cd04169">
    <property type="entry name" value="RF3"/>
    <property type="match status" value="1"/>
</dbReference>
<dbReference type="CDD" id="cd03689">
    <property type="entry name" value="RF3_II"/>
    <property type="match status" value="1"/>
</dbReference>
<dbReference type="CDD" id="cd16259">
    <property type="entry name" value="RF3_III"/>
    <property type="match status" value="1"/>
</dbReference>
<dbReference type="FunFam" id="2.40.30.10:FF:000040">
    <property type="entry name" value="Peptide chain release factor 3"/>
    <property type="match status" value="1"/>
</dbReference>
<dbReference type="FunFam" id="3.30.70.3280:FF:000001">
    <property type="entry name" value="Peptide chain release factor 3"/>
    <property type="match status" value="1"/>
</dbReference>
<dbReference type="FunFam" id="3.40.50.300:FF:000542">
    <property type="entry name" value="Peptide chain release factor 3"/>
    <property type="match status" value="1"/>
</dbReference>
<dbReference type="Gene3D" id="3.40.50.300">
    <property type="entry name" value="P-loop containing nucleotide triphosphate hydrolases"/>
    <property type="match status" value="2"/>
</dbReference>
<dbReference type="Gene3D" id="3.30.70.3280">
    <property type="entry name" value="Peptide chain release factor 3, domain III"/>
    <property type="match status" value="1"/>
</dbReference>
<dbReference type="HAMAP" id="MF_00072">
    <property type="entry name" value="Rel_fac_3"/>
    <property type="match status" value="1"/>
</dbReference>
<dbReference type="InterPro" id="IPR053905">
    <property type="entry name" value="EF-G-like_DII"/>
</dbReference>
<dbReference type="InterPro" id="IPR035647">
    <property type="entry name" value="EFG_III/V"/>
</dbReference>
<dbReference type="InterPro" id="IPR031157">
    <property type="entry name" value="G_TR_CS"/>
</dbReference>
<dbReference type="InterPro" id="IPR027417">
    <property type="entry name" value="P-loop_NTPase"/>
</dbReference>
<dbReference type="InterPro" id="IPR004548">
    <property type="entry name" value="PrfC"/>
</dbReference>
<dbReference type="InterPro" id="IPR032090">
    <property type="entry name" value="RF3_C"/>
</dbReference>
<dbReference type="InterPro" id="IPR038467">
    <property type="entry name" value="RF3_dom_3_sf"/>
</dbReference>
<dbReference type="InterPro" id="IPR041732">
    <property type="entry name" value="RF3_GTP-bd"/>
</dbReference>
<dbReference type="InterPro" id="IPR005225">
    <property type="entry name" value="Small_GTP-bd"/>
</dbReference>
<dbReference type="InterPro" id="IPR000795">
    <property type="entry name" value="T_Tr_GTP-bd_dom"/>
</dbReference>
<dbReference type="InterPro" id="IPR009000">
    <property type="entry name" value="Transl_B-barrel_sf"/>
</dbReference>
<dbReference type="NCBIfam" id="TIGR00503">
    <property type="entry name" value="prfC"/>
    <property type="match status" value="1"/>
</dbReference>
<dbReference type="NCBIfam" id="NF001964">
    <property type="entry name" value="PRK00741.1"/>
    <property type="match status" value="1"/>
</dbReference>
<dbReference type="NCBIfam" id="TIGR00231">
    <property type="entry name" value="small_GTP"/>
    <property type="match status" value="1"/>
</dbReference>
<dbReference type="PANTHER" id="PTHR43556">
    <property type="entry name" value="PEPTIDE CHAIN RELEASE FACTOR RF3"/>
    <property type="match status" value="1"/>
</dbReference>
<dbReference type="PANTHER" id="PTHR43556:SF2">
    <property type="entry name" value="PEPTIDE CHAIN RELEASE FACTOR RF3"/>
    <property type="match status" value="1"/>
</dbReference>
<dbReference type="Pfam" id="PF22042">
    <property type="entry name" value="EF-G_D2"/>
    <property type="match status" value="1"/>
</dbReference>
<dbReference type="Pfam" id="PF00009">
    <property type="entry name" value="GTP_EFTU"/>
    <property type="match status" value="1"/>
</dbReference>
<dbReference type="Pfam" id="PF16658">
    <property type="entry name" value="RF3_C"/>
    <property type="match status" value="1"/>
</dbReference>
<dbReference type="PRINTS" id="PR00315">
    <property type="entry name" value="ELONGATNFCT"/>
</dbReference>
<dbReference type="SUPFAM" id="SSF54980">
    <property type="entry name" value="EF-G C-terminal domain-like"/>
    <property type="match status" value="1"/>
</dbReference>
<dbReference type="SUPFAM" id="SSF52540">
    <property type="entry name" value="P-loop containing nucleoside triphosphate hydrolases"/>
    <property type="match status" value="1"/>
</dbReference>
<dbReference type="SUPFAM" id="SSF50447">
    <property type="entry name" value="Translation proteins"/>
    <property type="match status" value="1"/>
</dbReference>
<dbReference type="PROSITE" id="PS00301">
    <property type="entry name" value="G_TR_1"/>
    <property type="match status" value="1"/>
</dbReference>
<dbReference type="PROSITE" id="PS51722">
    <property type="entry name" value="G_TR_2"/>
    <property type="match status" value="1"/>
</dbReference>
<reference key="1">
    <citation type="journal article" date="2008" name="BMC Genomics">
        <title>Genome sequence and rapid evolution of the rice pathogen Xanthomonas oryzae pv. oryzae PXO99A.</title>
        <authorList>
            <person name="Salzberg S.L."/>
            <person name="Sommer D.D."/>
            <person name="Schatz M.C."/>
            <person name="Phillippy A.M."/>
            <person name="Rabinowicz P.D."/>
            <person name="Tsuge S."/>
            <person name="Furutani A."/>
            <person name="Ochiai H."/>
            <person name="Delcher A.L."/>
            <person name="Kelley D."/>
            <person name="Madupu R."/>
            <person name="Puiu D."/>
            <person name="Radune D."/>
            <person name="Shumway M."/>
            <person name="Trapnell C."/>
            <person name="Aparna G."/>
            <person name="Jha G."/>
            <person name="Pandey A."/>
            <person name="Patil P.B."/>
            <person name="Ishihara H."/>
            <person name="Meyer D.F."/>
            <person name="Szurek B."/>
            <person name="Verdier V."/>
            <person name="Koebnik R."/>
            <person name="Dow J.M."/>
            <person name="Ryan R.P."/>
            <person name="Hirata H."/>
            <person name="Tsuyumu S."/>
            <person name="Won Lee S."/>
            <person name="Seo Y.-S."/>
            <person name="Sriariyanum M."/>
            <person name="Ronald P.C."/>
            <person name="Sonti R.V."/>
            <person name="Van Sluys M.-A."/>
            <person name="Leach J.E."/>
            <person name="White F.F."/>
            <person name="Bogdanove A.J."/>
        </authorList>
    </citation>
    <scope>NUCLEOTIDE SEQUENCE [LARGE SCALE GENOMIC DNA]</scope>
    <source>
        <strain>PXO99A</strain>
    </source>
</reference>
<protein>
    <recommendedName>
        <fullName evidence="1">Peptide chain release factor 3</fullName>
        <shortName evidence="1">RF-3</shortName>
    </recommendedName>
</protein>